<comment type="function">
    <text>Involved in the transcriptional regulation of the propionate catabolism operon.</text>
</comment>
<dbReference type="EMBL" id="U51879">
    <property type="protein sequence ID" value="AAC44813.1"/>
    <property type="molecule type" value="Genomic_DNA"/>
</dbReference>
<dbReference type="EMBL" id="AE006468">
    <property type="protein sequence ID" value="AAL19321.1"/>
    <property type="molecule type" value="Genomic_DNA"/>
</dbReference>
<dbReference type="RefSeq" id="NP_459362.1">
    <property type="nucleotide sequence ID" value="NC_003197.2"/>
</dbReference>
<dbReference type="RefSeq" id="WP_000205278.1">
    <property type="nucleotide sequence ID" value="NC_003197.2"/>
</dbReference>
<dbReference type="SMR" id="P74839"/>
<dbReference type="STRING" id="99287.STM0367"/>
<dbReference type="PaxDb" id="99287-STM0367"/>
<dbReference type="GeneID" id="1251886"/>
<dbReference type="KEGG" id="stm:STM0367"/>
<dbReference type="PATRIC" id="fig|99287.12.peg.388"/>
<dbReference type="HOGENOM" id="CLU_000445_8_5_6"/>
<dbReference type="OMA" id="IMLYARS"/>
<dbReference type="PhylomeDB" id="P74839"/>
<dbReference type="BioCyc" id="SENT99287:STM0367-MONOMER"/>
<dbReference type="Proteomes" id="UP000001014">
    <property type="component" value="Chromosome"/>
</dbReference>
<dbReference type="GO" id="GO:0005737">
    <property type="term" value="C:cytoplasm"/>
    <property type="evidence" value="ECO:0007669"/>
    <property type="project" value="InterPro"/>
</dbReference>
<dbReference type="GO" id="GO:0032993">
    <property type="term" value="C:protein-DNA complex"/>
    <property type="evidence" value="ECO:0000318"/>
    <property type="project" value="GO_Central"/>
</dbReference>
<dbReference type="GO" id="GO:0005524">
    <property type="term" value="F:ATP binding"/>
    <property type="evidence" value="ECO:0007669"/>
    <property type="project" value="UniProtKB-KW"/>
</dbReference>
<dbReference type="GO" id="GO:0016887">
    <property type="term" value="F:ATP hydrolysis activity"/>
    <property type="evidence" value="ECO:0007669"/>
    <property type="project" value="InterPro"/>
</dbReference>
<dbReference type="GO" id="GO:0000987">
    <property type="term" value="F:cis-regulatory region sequence-specific DNA binding"/>
    <property type="evidence" value="ECO:0000318"/>
    <property type="project" value="GO_Central"/>
</dbReference>
<dbReference type="GO" id="GO:0001216">
    <property type="term" value="F:DNA-binding transcription activator activity"/>
    <property type="evidence" value="ECO:0000318"/>
    <property type="project" value="GO_Central"/>
</dbReference>
<dbReference type="GO" id="GO:0000156">
    <property type="term" value="F:phosphorelay response regulator activity"/>
    <property type="evidence" value="ECO:0007669"/>
    <property type="project" value="InterPro"/>
</dbReference>
<dbReference type="GO" id="GO:0045893">
    <property type="term" value="P:positive regulation of DNA-templated transcription"/>
    <property type="evidence" value="ECO:0000318"/>
    <property type="project" value="GO_Central"/>
</dbReference>
<dbReference type="GO" id="GO:0019629">
    <property type="term" value="P:propionate catabolic process, 2-methylcitrate cycle"/>
    <property type="evidence" value="ECO:0007669"/>
    <property type="project" value="InterPro"/>
</dbReference>
<dbReference type="CDD" id="cd00009">
    <property type="entry name" value="AAA"/>
    <property type="match status" value="1"/>
</dbReference>
<dbReference type="FunFam" id="3.40.50.300:FF:000006">
    <property type="entry name" value="DNA-binding transcriptional regulator NtrC"/>
    <property type="match status" value="1"/>
</dbReference>
<dbReference type="FunFam" id="3.40.50.2300:FF:000175">
    <property type="entry name" value="Propionate catabolism operon regulatory protein PrpR"/>
    <property type="match status" value="1"/>
</dbReference>
<dbReference type="Gene3D" id="1.10.8.60">
    <property type="match status" value="1"/>
</dbReference>
<dbReference type="Gene3D" id="1.20.5.170">
    <property type="match status" value="1"/>
</dbReference>
<dbReference type="Gene3D" id="3.40.50.2300">
    <property type="match status" value="1"/>
</dbReference>
<dbReference type="Gene3D" id="1.10.10.60">
    <property type="entry name" value="Homeodomain-like"/>
    <property type="match status" value="1"/>
</dbReference>
<dbReference type="Gene3D" id="3.40.50.300">
    <property type="entry name" value="P-loop containing nucleotide triphosphate hydrolases"/>
    <property type="match status" value="1"/>
</dbReference>
<dbReference type="InterPro" id="IPR003593">
    <property type="entry name" value="AAA+_ATPase"/>
</dbReference>
<dbReference type="InterPro" id="IPR009057">
    <property type="entry name" value="Homeodomain-like_sf"/>
</dbReference>
<dbReference type="InterPro" id="IPR002197">
    <property type="entry name" value="HTH_Fis"/>
</dbReference>
<dbReference type="InterPro" id="IPR027417">
    <property type="entry name" value="P-loop_NTPase"/>
</dbReference>
<dbReference type="InterPro" id="IPR012704">
    <property type="entry name" value="Sig_transdc_resp-reg_PrpR"/>
</dbReference>
<dbReference type="InterPro" id="IPR010524">
    <property type="entry name" value="Sig_transdc_resp-reg_PrpR_N"/>
</dbReference>
<dbReference type="InterPro" id="IPR002078">
    <property type="entry name" value="Sigma_54_int"/>
</dbReference>
<dbReference type="InterPro" id="IPR025943">
    <property type="entry name" value="Sigma_54_int_dom_ATP-bd_2"/>
</dbReference>
<dbReference type="InterPro" id="IPR025944">
    <property type="entry name" value="Sigma_54_int_dom_CS"/>
</dbReference>
<dbReference type="NCBIfam" id="NF011953">
    <property type="entry name" value="PRK15424.1"/>
    <property type="match status" value="1"/>
</dbReference>
<dbReference type="NCBIfam" id="TIGR02329">
    <property type="entry name" value="propionate_PrpR"/>
    <property type="match status" value="1"/>
</dbReference>
<dbReference type="PANTHER" id="PTHR32071:SF81">
    <property type="entry name" value="PROPIONATE CATABOLISM OPERON REGULATORY PROTEIN"/>
    <property type="match status" value="1"/>
</dbReference>
<dbReference type="PANTHER" id="PTHR32071">
    <property type="entry name" value="TRANSCRIPTIONAL REGULATORY PROTEIN"/>
    <property type="match status" value="1"/>
</dbReference>
<dbReference type="Pfam" id="PF02954">
    <property type="entry name" value="HTH_8"/>
    <property type="match status" value="1"/>
</dbReference>
<dbReference type="Pfam" id="PF06506">
    <property type="entry name" value="PrpR_N"/>
    <property type="match status" value="1"/>
</dbReference>
<dbReference type="Pfam" id="PF00158">
    <property type="entry name" value="Sigma54_activat"/>
    <property type="match status" value="1"/>
</dbReference>
<dbReference type="SMART" id="SM00382">
    <property type="entry name" value="AAA"/>
    <property type="match status" value="1"/>
</dbReference>
<dbReference type="SUPFAM" id="SSF46689">
    <property type="entry name" value="Homeodomain-like"/>
    <property type="match status" value="1"/>
</dbReference>
<dbReference type="SUPFAM" id="SSF52540">
    <property type="entry name" value="P-loop containing nucleoside triphosphate hydrolases"/>
    <property type="match status" value="1"/>
</dbReference>
<dbReference type="SUPFAM" id="SSF159800">
    <property type="entry name" value="PrpR receptor domain-like"/>
    <property type="match status" value="1"/>
</dbReference>
<dbReference type="PROSITE" id="PS00676">
    <property type="entry name" value="SIGMA54_INTERACT_2"/>
    <property type="match status" value="1"/>
</dbReference>
<dbReference type="PROSITE" id="PS00688">
    <property type="entry name" value="SIGMA54_INTERACT_3"/>
    <property type="match status" value="1"/>
</dbReference>
<dbReference type="PROSITE" id="PS50045">
    <property type="entry name" value="SIGMA54_INTERACT_4"/>
    <property type="match status" value="1"/>
</dbReference>
<keyword id="KW-0067">ATP-binding</keyword>
<keyword id="KW-0238">DNA-binding</keyword>
<keyword id="KW-0547">Nucleotide-binding</keyword>
<keyword id="KW-1185">Reference proteome</keyword>
<keyword id="KW-0804">Transcription</keyword>
<keyword id="KW-0805">Transcription regulation</keyword>
<keyword id="KW-0902">Two-component regulatory system</keyword>
<accession>P74839</accession>
<name>PRPR_SALTY</name>
<organism>
    <name type="scientific">Salmonella typhimurium (strain LT2 / SGSC1412 / ATCC 700720)</name>
    <dbReference type="NCBI Taxonomy" id="99287"/>
    <lineage>
        <taxon>Bacteria</taxon>
        <taxon>Pseudomonadati</taxon>
        <taxon>Pseudomonadota</taxon>
        <taxon>Gammaproteobacteria</taxon>
        <taxon>Enterobacterales</taxon>
        <taxon>Enterobacteriaceae</taxon>
        <taxon>Salmonella</taxon>
    </lineage>
</organism>
<protein>
    <recommendedName>
        <fullName>Propionate catabolism operon regulatory protein</fullName>
    </recommendedName>
</protein>
<gene>
    <name type="primary">prpR</name>
    <name type="ordered locus">STM0367</name>
</gene>
<sequence>MTTAHSAPRDNSDKPVIWTVSVTRLFELFRDISLEFDHLATITPIQLGFEKAVTYIRKKLATERCDAIIAAGSNGAYLKSRLSIPVILIKPSGFDVLQALAKAGKLTSSIGIVTYQETIPALLAFQKTFHLRLEQRSYVTEEDARGQINELKANGIEAVVGAGLITDLAEEAGMTAIFIYSAATVRQAFHDALDMTRLTRRQRVDYPSGKGLQTRYELGDIRGQSPQMEQLRQTITLYARSRAAVLIQGETGTGKELAAQAIHQTFFHRQPHRQNKPSPPFVAVNCGAITESLLEAELFGYEEGAFTGSRRGGRAGLFEIAHGGTLFLDEIGEMPLPLQTRLLRVLEEKAVTRVGGHQPIPVDVRVISATHCDLDREIMQGRFRPDLFYRLSILRLTLPPLRERQADILPLAESFLKQSLAAMEIPFTESIRHGLTQCQPLLLAWRWPGNIRELRNMMERLALFLSVDPAPTLDRQFMRQLLPELMVNTAELTPSTVDANALQDVLARFKGDKTAAARYLGISRTTLWRRLKAGAKDQSDN</sequence>
<evidence type="ECO:0000250" key="1"/>
<evidence type="ECO:0000255" key="2">
    <source>
        <dbReference type="PROSITE-ProRule" id="PRU00193"/>
    </source>
</evidence>
<reference key="1">
    <citation type="journal article" date="1997" name="J. Bacteriol.">
        <title>Propionate catabolism in Salmonella typhimurium LT2: two divergently transcribed units comprise the prp locus at 8.5 centisomes, prpR encodes a member of the sigma-54 family of activators, and the prpBCDE genes constitute an operon.</title>
        <authorList>
            <person name="Horswill A.R."/>
            <person name="Escalante-Semerena J.C."/>
        </authorList>
    </citation>
    <scope>NUCLEOTIDE SEQUENCE [GENOMIC DNA]</scope>
    <source>
        <strain>LT2</strain>
    </source>
</reference>
<reference key="2">
    <citation type="journal article" date="2001" name="Nature">
        <title>Complete genome sequence of Salmonella enterica serovar Typhimurium LT2.</title>
        <authorList>
            <person name="McClelland M."/>
            <person name="Sanderson K.E."/>
            <person name="Spieth J."/>
            <person name="Clifton S.W."/>
            <person name="Latreille P."/>
            <person name="Courtney L."/>
            <person name="Porwollik S."/>
            <person name="Ali J."/>
            <person name="Dante M."/>
            <person name="Du F."/>
            <person name="Hou S."/>
            <person name="Layman D."/>
            <person name="Leonard S."/>
            <person name="Nguyen C."/>
            <person name="Scott K."/>
            <person name="Holmes A."/>
            <person name="Grewal N."/>
            <person name="Mulvaney E."/>
            <person name="Ryan E."/>
            <person name="Sun H."/>
            <person name="Florea L."/>
            <person name="Miller W."/>
            <person name="Stoneking T."/>
            <person name="Nhan M."/>
            <person name="Waterston R."/>
            <person name="Wilson R.K."/>
        </authorList>
    </citation>
    <scope>NUCLEOTIDE SEQUENCE [LARGE SCALE GENOMIC DNA]</scope>
    <source>
        <strain>LT2 / SGSC1412 / ATCC 700720</strain>
    </source>
</reference>
<feature type="chain" id="PRO_0000081325" description="Propionate catabolism operon regulatory protein">
    <location>
        <begin position="1"/>
        <end position="541"/>
    </location>
</feature>
<feature type="domain" description="Sigma-54 factor interaction" evidence="2">
    <location>
        <begin position="221"/>
        <end position="464"/>
    </location>
</feature>
<feature type="DNA-binding region" description="H-T-H motif" evidence="1">
    <location>
        <begin position="513"/>
        <end position="532"/>
    </location>
</feature>
<feature type="binding site" evidence="2">
    <location>
        <begin position="321"/>
        <end position="330"/>
    </location>
    <ligand>
        <name>ATP</name>
        <dbReference type="ChEBI" id="CHEBI:30616"/>
    </ligand>
</feature>
<proteinExistence type="predicted"/>